<dbReference type="EC" id="1.10.3.9" evidence="2"/>
<dbReference type="EMBL" id="EU262889">
    <property type="protein sequence ID" value="ABW98868.1"/>
    <property type="molecule type" value="Genomic_DNA"/>
</dbReference>
<dbReference type="RefSeq" id="YP_001687363.1">
    <property type="nucleotide sequence ID" value="NC_010361.1"/>
</dbReference>
<dbReference type="SMR" id="B0Z4V6"/>
<dbReference type="GeneID" id="5951960"/>
<dbReference type="GO" id="GO:0009535">
    <property type="term" value="C:chloroplast thylakoid membrane"/>
    <property type="evidence" value="ECO:0007669"/>
    <property type="project" value="UniProtKB-SubCell"/>
</dbReference>
<dbReference type="GO" id="GO:0009523">
    <property type="term" value="C:photosystem II"/>
    <property type="evidence" value="ECO:0007669"/>
    <property type="project" value="UniProtKB-KW"/>
</dbReference>
<dbReference type="GO" id="GO:0016168">
    <property type="term" value="F:chlorophyll binding"/>
    <property type="evidence" value="ECO:0007669"/>
    <property type="project" value="UniProtKB-UniRule"/>
</dbReference>
<dbReference type="GO" id="GO:0045156">
    <property type="term" value="F:electron transporter, transferring electrons within the cyclic electron transport pathway of photosynthesis activity"/>
    <property type="evidence" value="ECO:0007669"/>
    <property type="project" value="InterPro"/>
</dbReference>
<dbReference type="GO" id="GO:0005506">
    <property type="term" value="F:iron ion binding"/>
    <property type="evidence" value="ECO:0007669"/>
    <property type="project" value="UniProtKB-UniRule"/>
</dbReference>
<dbReference type="GO" id="GO:0010242">
    <property type="term" value="F:oxygen evolving activity"/>
    <property type="evidence" value="ECO:0007669"/>
    <property type="project" value="UniProtKB-EC"/>
</dbReference>
<dbReference type="GO" id="GO:0009772">
    <property type="term" value="P:photosynthetic electron transport in photosystem II"/>
    <property type="evidence" value="ECO:0007669"/>
    <property type="project" value="InterPro"/>
</dbReference>
<dbReference type="CDD" id="cd09288">
    <property type="entry name" value="Photosystem-II_D2"/>
    <property type="match status" value="1"/>
</dbReference>
<dbReference type="FunFam" id="1.20.85.10:FF:000001">
    <property type="entry name" value="photosystem II D2 protein-like"/>
    <property type="match status" value="1"/>
</dbReference>
<dbReference type="Gene3D" id="1.20.85.10">
    <property type="entry name" value="Photosystem II protein D1-like"/>
    <property type="match status" value="1"/>
</dbReference>
<dbReference type="HAMAP" id="MF_01383">
    <property type="entry name" value="PSII_PsbD_D2"/>
    <property type="match status" value="1"/>
</dbReference>
<dbReference type="InterPro" id="IPR055266">
    <property type="entry name" value="D1/D2"/>
</dbReference>
<dbReference type="InterPro" id="IPR036854">
    <property type="entry name" value="Photo_II_D1/D2_sf"/>
</dbReference>
<dbReference type="InterPro" id="IPR000484">
    <property type="entry name" value="Photo_RC_L/M"/>
</dbReference>
<dbReference type="InterPro" id="IPR055265">
    <property type="entry name" value="Photo_RC_L/M_CS"/>
</dbReference>
<dbReference type="InterPro" id="IPR005868">
    <property type="entry name" value="PSII_PsbD/D2"/>
</dbReference>
<dbReference type="NCBIfam" id="TIGR01152">
    <property type="entry name" value="psbD"/>
    <property type="match status" value="1"/>
</dbReference>
<dbReference type="PANTHER" id="PTHR33149:SF57">
    <property type="entry name" value="PHOTOSYSTEM II D2 PROTEIN"/>
    <property type="match status" value="1"/>
</dbReference>
<dbReference type="PANTHER" id="PTHR33149">
    <property type="entry name" value="PHOTOSYSTEM II PROTEIN D1"/>
    <property type="match status" value="1"/>
</dbReference>
<dbReference type="Pfam" id="PF00124">
    <property type="entry name" value="Photo_RC"/>
    <property type="match status" value="1"/>
</dbReference>
<dbReference type="PRINTS" id="PR00256">
    <property type="entry name" value="REACTNCENTRE"/>
</dbReference>
<dbReference type="SUPFAM" id="SSF81483">
    <property type="entry name" value="Bacterial photosystem II reaction centre, L and M subunits"/>
    <property type="match status" value="1"/>
</dbReference>
<dbReference type="PROSITE" id="PS00244">
    <property type="entry name" value="REACTION_CENTER"/>
    <property type="match status" value="1"/>
</dbReference>
<feature type="initiator methionine" description="Removed" evidence="1">
    <location>
        <position position="1"/>
    </location>
</feature>
<feature type="chain" id="PRO_0000359676" description="Photosystem II D2 protein">
    <location>
        <begin position="2"/>
        <end position="353"/>
    </location>
</feature>
<feature type="transmembrane region" description="Helical" evidence="2">
    <location>
        <begin position="41"/>
        <end position="61"/>
    </location>
</feature>
<feature type="transmembrane region" description="Helical" evidence="2">
    <location>
        <begin position="125"/>
        <end position="141"/>
    </location>
</feature>
<feature type="transmembrane region" description="Helical" evidence="2">
    <location>
        <begin position="153"/>
        <end position="166"/>
    </location>
</feature>
<feature type="transmembrane region" description="Helical" evidence="2">
    <location>
        <begin position="208"/>
        <end position="228"/>
    </location>
</feature>
<feature type="transmembrane region" description="Helical" evidence="2">
    <location>
        <begin position="279"/>
        <end position="295"/>
    </location>
</feature>
<feature type="binding site" description="axial binding residue" evidence="2">
    <location>
        <position position="118"/>
    </location>
    <ligand>
        <name>chlorophyll a</name>
        <dbReference type="ChEBI" id="CHEBI:58416"/>
        <label>ChlzD2</label>
    </ligand>
    <ligandPart>
        <name>Mg</name>
        <dbReference type="ChEBI" id="CHEBI:25107"/>
    </ligandPart>
</feature>
<feature type="binding site" evidence="2">
    <location>
        <position position="130"/>
    </location>
    <ligand>
        <name>pheophytin a</name>
        <dbReference type="ChEBI" id="CHEBI:136840"/>
        <label>D2</label>
    </ligand>
</feature>
<feature type="binding site" evidence="2">
    <location>
        <position position="143"/>
    </location>
    <ligand>
        <name>pheophytin a</name>
        <dbReference type="ChEBI" id="CHEBI:136840"/>
        <label>D2</label>
    </ligand>
</feature>
<feature type="binding site" description="axial binding residue" evidence="2">
    <location>
        <position position="198"/>
    </location>
    <ligand>
        <name>chlorophyll a</name>
        <dbReference type="ChEBI" id="CHEBI:58416"/>
        <label>PD2</label>
    </ligand>
    <ligandPart>
        <name>Mg</name>
        <dbReference type="ChEBI" id="CHEBI:25107"/>
    </ligandPart>
</feature>
<feature type="binding site" evidence="2">
    <location>
        <position position="215"/>
    </location>
    <ligand>
        <name>a plastoquinone</name>
        <dbReference type="ChEBI" id="CHEBI:17757"/>
        <label>Q(A)</label>
    </ligand>
</feature>
<feature type="binding site" evidence="2">
    <location>
        <position position="215"/>
    </location>
    <ligand>
        <name>Fe cation</name>
        <dbReference type="ChEBI" id="CHEBI:24875"/>
        <note>ligand shared with heterodimeric partner</note>
    </ligand>
</feature>
<feature type="binding site" evidence="2">
    <location>
        <position position="262"/>
    </location>
    <ligand>
        <name>a plastoquinone</name>
        <dbReference type="ChEBI" id="CHEBI:17757"/>
        <label>Q(A)</label>
    </ligand>
</feature>
<feature type="binding site" evidence="2">
    <location>
        <position position="269"/>
    </location>
    <ligand>
        <name>Fe cation</name>
        <dbReference type="ChEBI" id="CHEBI:24875"/>
        <note>ligand shared with heterodimeric partner</note>
    </ligand>
</feature>
<feature type="modified residue" description="N-acetylthreonine" evidence="1">
    <location>
        <position position="2"/>
    </location>
</feature>
<feature type="modified residue" description="Phosphothreonine" evidence="1">
    <location>
        <position position="2"/>
    </location>
</feature>
<comment type="function">
    <text evidence="2">Photosystem II (PSII) is a light-driven water:plastoquinone oxidoreductase that uses light energy to abstract electrons from H(2)O, generating O(2) and a proton gradient subsequently used for ATP formation. It consists of a core antenna complex that captures photons, and an electron transfer chain that converts photonic excitation into a charge separation. The D1/D2 (PsbA/PsbD) reaction center heterodimer binds P680, the primary electron donor of PSII as well as several subsequent electron acceptors. D2 is needed for assembly of a stable PSII complex.</text>
</comment>
<comment type="catalytic activity">
    <reaction evidence="2">
        <text>2 a plastoquinone + 4 hnu + 2 H2O = 2 a plastoquinol + O2</text>
        <dbReference type="Rhea" id="RHEA:36359"/>
        <dbReference type="Rhea" id="RHEA-COMP:9561"/>
        <dbReference type="Rhea" id="RHEA-COMP:9562"/>
        <dbReference type="ChEBI" id="CHEBI:15377"/>
        <dbReference type="ChEBI" id="CHEBI:15379"/>
        <dbReference type="ChEBI" id="CHEBI:17757"/>
        <dbReference type="ChEBI" id="CHEBI:30212"/>
        <dbReference type="ChEBI" id="CHEBI:62192"/>
        <dbReference type="EC" id="1.10.3.9"/>
    </reaction>
</comment>
<comment type="cofactor">
    <text evidence="2">The D1/D2 heterodimer binds P680, chlorophylls that are the primary electron donor of PSII, and subsequent electron acceptors. It shares a non-heme iron and each subunit binds pheophytin, quinone, additional chlorophylls, carotenoids and lipids. There is also a Cl(-1) ion associated with D1 and D2, which is required for oxygen evolution. The PSII complex binds additional chlorophylls, carotenoids and specific lipids.</text>
</comment>
<comment type="subunit">
    <text evidence="2">PSII is composed of 1 copy each of membrane proteins PsbA, PsbB, PsbC, PsbD, PsbE, PsbF, PsbH, PsbI, PsbJ, PsbK, PsbL, PsbM, PsbT, PsbX, PsbY, PsbZ, Psb30/Ycf12, at least 3 peripheral proteins of the oxygen-evolving complex and a large number of cofactors. It forms dimeric complexes.</text>
</comment>
<comment type="subcellular location">
    <subcellularLocation>
        <location evidence="2">Plastid</location>
        <location evidence="2">Chloroplast thylakoid membrane</location>
        <topology evidence="2">Multi-pass membrane protein</topology>
    </subcellularLocation>
</comment>
<comment type="miscellaneous">
    <text evidence="2">2 of the reaction center chlorophylls (ChlD1 and ChlD2) are entirely coordinated by water.</text>
</comment>
<comment type="similarity">
    <text evidence="2">Belongs to the reaction center PufL/M/PsbA/D family.</text>
</comment>
<organism>
    <name type="scientific">Oenothera biennis</name>
    <name type="common">German evening primrose</name>
    <name type="synonym">Onagra biennis</name>
    <dbReference type="NCBI Taxonomy" id="3942"/>
    <lineage>
        <taxon>Eukaryota</taxon>
        <taxon>Viridiplantae</taxon>
        <taxon>Streptophyta</taxon>
        <taxon>Embryophyta</taxon>
        <taxon>Tracheophyta</taxon>
        <taxon>Spermatophyta</taxon>
        <taxon>Magnoliopsida</taxon>
        <taxon>eudicotyledons</taxon>
        <taxon>Gunneridae</taxon>
        <taxon>Pentapetalae</taxon>
        <taxon>rosids</taxon>
        <taxon>malvids</taxon>
        <taxon>Myrtales</taxon>
        <taxon>Onagraceae</taxon>
        <taxon>Onagroideae</taxon>
        <taxon>Onagreae</taxon>
        <taxon>Oenothera</taxon>
    </lineage>
</organism>
<name>PSBD_OENBI</name>
<keyword id="KW-0007">Acetylation</keyword>
<keyword id="KW-0148">Chlorophyll</keyword>
<keyword id="KW-0150">Chloroplast</keyword>
<keyword id="KW-0157">Chromophore</keyword>
<keyword id="KW-0249">Electron transport</keyword>
<keyword id="KW-0408">Iron</keyword>
<keyword id="KW-0460">Magnesium</keyword>
<keyword id="KW-0472">Membrane</keyword>
<keyword id="KW-0479">Metal-binding</keyword>
<keyword id="KW-0560">Oxidoreductase</keyword>
<keyword id="KW-0597">Phosphoprotein</keyword>
<keyword id="KW-0602">Photosynthesis</keyword>
<keyword id="KW-0604">Photosystem II</keyword>
<keyword id="KW-0934">Plastid</keyword>
<keyword id="KW-0793">Thylakoid</keyword>
<keyword id="KW-0812">Transmembrane</keyword>
<keyword id="KW-1133">Transmembrane helix</keyword>
<keyword id="KW-0813">Transport</keyword>
<geneLocation type="chloroplast"/>
<proteinExistence type="inferred from homology"/>
<evidence type="ECO:0000250" key="1">
    <source>
        <dbReference type="UniProtKB" id="P56761"/>
    </source>
</evidence>
<evidence type="ECO:0000255" key="2">
    <source>
        <dbReference type="HAMAP-Rule" id="MF_01383"/>
    </source>
</evidence>
<accession>B0Z4V6</accession>
<gene>
    <name evidence="2" type="primary">psbD</name>
</gene>
<reference key="1">
    <citation type="journal article" date="2008" name="Nucleic Acids Res.">
        <title>The complete nucleotide sequences of the five genetically distinct plastid genomes of Oenothera, subsection Oenothera: I. Sequence evaluation and plastome evolution.</title>
        <authorList>
            <person name="Greiner S."/>
            <person name="Wang X."/>
            <person name="Rauwolf U."/>
            <person name="Silber M.V."/>
            <person name="Mayer K."/>
            <person name="Meurer J."/>
            <person name="Haberer G."/>
            <person name="Herrmann R.G."/>
        </authorList>
    </citation>
    <scope>NUCLEOTIDE SEQUENCE [LARGE SCALE GENOMIC DNA]</scope>
    <source>
        <strain>cv. Suaveolens Grado</strain>
    </source>
</reference>
<protein>
    <recommendedName>
        <fullName evidence="2">Photosystem II D2 protein</fullName>
        <shortName evidence="2">PSII D2 protein</shortName>
        <ecNumber evidence="2">1.10.3.9</ecNumber>
    </recommendedName>
    <alternativeName>
        <fullName evidence="2">Photosystem Q(A) protein</fullName>
    </alternativeName>
</protein>
<sequence length="353" mass="39578">MTIALGKFTKDEKDLFDIMDDWLRRDRFVFVGWSGLLLFPCAYFALGGWFTGTTFVTSWYTHGLASSYLEGCNFLTAAVSTPANSLAHSLLLLWGPEAQGDFTRWCQLGGLWTFVALHGAFALIGFMLRQFEIARSVQLRPYNAIAFSGPIAVFVSVFLIYPLGQSGWFFAPSFGVAAIFRFILFFQGFHNWTLNPFHMMGVAGVLGAALLCAIHGATVENTLFEDGDGANTFRAFNPTQAEETYSMVTANRFWSQIFGVAFSNKRWLHFFMLFVPVTGLWMSALGVVGLALNLRAYDFVSQEIRAAEDPEFETFYTKNILLNEGIRAWMAAQDQPHENLIFPEEVLPRGNAL</sequence>